<reference key="1">
    <citation type="journal article" date="2007" name="PLoS ONE">
        <title>Analysis of the neurotoxin complex genes in Clostridium botulinum A1-A4 and B1 strains: BoNT/A3, /Ba4 and /B1 clusters are located within plasmids.</title>
        <authorList>
            <person name="Smith T.J."/>
            <person name="Hill K.K."/>
            <person name="Foley B.T."/>
            <person name="Detter J.C."/>
            <person name="Munk A.C."/>
            <person name="Bruce D.C."/>
            <person name="Doggett N.A."/>
            <person name="Smith L.A."/>
            <person name="Marks J.D."/>
            <person name="Xie G."/>
            <person name="Brettin T.S."/>
        </authorList>
    </citation>
    <scope>NUCLEOTIDE SEQUENCE [LARGE SCALE GENOMIC DNA]</scope>
    <source>
        <strain>Okra / Type B1</strain>
    </source>
</reference>
<proteinExistence type="inferred from homology"/>
<keyword id="KW-0067">ATP-binding</keyword>
<keyword id="KW-0520">NAD</keyword>
<keyword id="KW-0547">Nucleotide-binding</keyword>
<keyword id="KW-0548">Nucleotidyltransferase</keyword>
<keyword id="KW-0662">Pyridine nucleotide biosynthesis</keyword>
<keyword id="KW-0808">Transferase</keyword>
<feature type="chain" id="PRO_1000100771" description="Probable nicotinate-nucleotide adenylyltransferase">
    <location>
        <begin position="1"/>
        <end position="201"/>
    </location>
</feature>
<sequence length="201" mass="23962">MINKAILGGTFDPIHNAHINVAYEALERFNLEEVIFIPAGNPPHKINLKKTPAHIRYEMVKLAIEKETRFSISDFEIKSKSLSYTYRTLKHFKEKEPETNWYFITGEDCLSYLEHWKYIDEIFNICNFVIFSREGFKEKEEIIKKKKSILLKYRKEILFMDASILDISSTKIRNRIKEGKEVSFYMPDKVYKFILQNNLYK</sequence>
<dbReference type="EC" id="2.7.7.18" evidence="1"/>
<dbReference type="EMBL" id="CP000939">
    <property type="protein sequence ID" value="ACA43453.1"/>
    <property type="molecule type" value="Genomic_DNA"/>
</dbReference>
<dbReference type="RefSeq" id="WP_003400771.1">
    <property type="nucleotide sequence ID" value="NC_010516.1"/>
</dbReference>
<dbReference type="SMR" id="B1ILY3"/>
<dbReference type="KEGG" id="cbb:CLD_1560"/>
<dbReference type="HOGENOM" id="CLU_069765_3_2_9"/>
<dbReference type="UniPathway" id="UPA00253">
    <property type="reaction ID" value="UER00332"/>
</dbReference>
<dbReference type="Proteomes" id="UP000008541">
    <property type="component" value="Chromosome"/>
</dbReference>
<dbReference type="GO" id="GO:0005524">
    <property type="term" value="F:ATP binding"/>
    <property type="evidence" value="ECO:0007669"/>
    <property type="project" value="UniProtKB-KW"/>
</dbReference>
<dbReference type="GO" id="GO:0004515">
    <property type="term" value="F:nicotinate-nucleotide adenylyltransferase activity"/>
    <property type="evidence" value="ECO:0007669"/>
    <property type="project" value="UniProtKB-UniRule"/>
</dbReference>
<dbReference type="GO" id="GO:0009435">
    <property type="term" value="P:NAD biosynthetic process"/>
    <property type="evidence" value="ECO:0007669"/>
    <property type="project" value="UniProtKB-UniRule"/>
</dbReference>
<dbReference type="CDD" id="cd02165">
    <property type="entry name" value="NMNAT"/>
    <property type="match status" value="1"/>
</dbReference>
<dbReference type="FunFam" id="3.40.50.620:FF:000255">
    <property type="entry name" value="Probable nicotinate-nucleotide adenylyltransferase"/>
    <property type="match status" value="1"/>
</dbReference>
<dbReference type="Gene3D" id="3.40.50.620">
    <property type="entry name" value="HUPs"/>
    <property type="match status" value="1"/>
</dbReference>
<dbReference type="HAMAP" id="MF_00244">
    <property type="entry name" value="NaMN_adenylyltr"/>
    <property type="match status" value="1"/>
</dbReference>
<dbReference type="InterPro" id="IPR004821">
    <property type="entry name" value="Cyt_trans-like"/>
</dbReference>
<dbReference type="InterPro" id="IPR005248">
    <property type="entry name" value="NadD/NMNAT"/>
</dbReference>
<dbReference type="InterPro" id="IPR014729">
    <property type="entry name" value="Rossmann-like_a/b/a_fold"/>
</dbReference>
<dbReference type="NCBIfam" id="TIGR00125">
    <property type="entry name" value="cyt_tran_rel"/>
    <property type="match status" value="1"/>
</dbReference>
<dbReference type="NCBIfam" id="TIGR00482">
    <property type="entry name" value="nicotinate (nicotinamide) nucleotide adenylyltransferase"/>
    <property type="match status" value="1"/>
</dbReference>
<dbReference type="NCBIfam" id="NF000840">
    <property type="entry name" value="PRK00071.1-3"/>
    <property type="match status" value="1"/>
</dbReference>
<dbReference type="PANTHER" id="PTHR39321">
    <property type="entry name" value="NICOTINATE-NUCLEOTIDE ADENYLYLTRANSFERASE-RELATED"/>
    <property type="match status" value="1"/>
</dbReference>
<dbReference type="PANTHER" id="PTHR39321:SF3">
    <property type="entry name" value="PHOSPHOPANTETHEINE ADENYLYLTRANSFERASE"/>
    <property type="match status" value="1"/>
</dbReference>
<dbReference type="Pfam" id="PF01467">
    <property type="entry name" value="CTP_transf_like"/>
    <property type="match status" value="1"/>
</dbReference>
<dbReference type="SUPFAM" id="SSF52374">
    <property type="entry name" value="Nucleotidylyl transferase"/>
    <property type="match status" value="1"/>
</dbReference>
<protein>
    <recommendedName>
        <fullName evidence="1">Probable nicotinate-nucleotide adenylyltransferase</fullName>
        <ecNumber evidence="1">2.7.7.18</ecNumber>
    </recommendedName>
    <alternativeName>
        <fullName evidence="1">Deamido-NAD(+) diphosphorylase</fullName>
    </alternativeName>
    <alternativeName>
        <fullName evidence="1">Deamido-NAD(+) pyrophosphorylase</fullName>
    </alternativeName>
    <alternativeName>
        <fullName evidence="1">Nicotinate mononucleotide adenylyltransferase</fullName>
        <shortName evidence="1">NaMN adenylyltransferase</shortName>
    </alternativeName>
</protein>
<comment type="function">
    <text evidence="1">Catalyzes the reversible adenylation of nicotinate mononucleotide (NaMN) to nicotinic acid adenine dinucleotide (NaAD).</text>
</comment>
<comment type="catalytic activity">
    <reaction evidence="1">
        <text>nicotinate beta-D-ribonucleotide + ATP + H(+) = deamido-NAD(+) + diphosphate</text>
        <dbReference type="Rhea" id="RHEA:22860"/>
        <dbReference type="ChEBI" id="CHEBI:15378"/>
        <dbReference type="ChEBI" id="CHEBI:30616"/>
        <dbReference type="ChEBI" id="CHEBI:33019"/>
        <dbReference type="ChEBI" id="CHEBI:57502"/>
        <dbReference type="ChEBI" id="CHEBI:58437"/>
        <dbReference type="EC" id="2.7.7.18"/>
    </reaction>
</comment>
<comment type="pathway">
    <text evidence="1">Cofactor biosynthesis; NAD(+) biosynthesis; deamido-NAD(+) from nicotinate D-ribonucleotide: step 1/1.</text>
</comment>
<comment type="similarity">
    <text evidence="1">Belongs to the NadD family.</text>
</comment>
<gene>
    <name evidence="1" type="primary">nadD</name>
    <name type="ordered locus">CLD_1560</name>
</gene>
<evidence type="ECO:0000255" key="1">
    <source>
        <dbReference type="HAMAP-Rule" id="MF_00244"/>
    </source>
</evidence>
<organism>
    <name type="scientific">Clostridium botulinum (strain Okra / Type B1)</name>
    <dbReference type="NCBI Taxonomy" id="498213"/>
    <lineage>
        <taxon>Bacteria</taxon>
        <taxon>Bacillati</taxon>
        <taxon>Bacillota</taxon>
        <taxon>Clostridia</taxon>
        <taxon>Eubacteriales</taxon>
        <taxon>Clostridiaceae</taxon>
        <taxon>Clostridium</taxon>
    </lineage>
</organism>
<name>NADD_CLOBK</name>
<accession>B1ILY3</accession>